<gene>
    <name evidence="1" type="primary">pyrC</name>
    <name type="ordered locus">EcSMS35_2067</name>
</gene>
<comment type="function">
    <text evidence="1">Catalyzes the reversible cyclization of carbamoyl aspartate to dihydroorotate.</text>
</comment>
<comment type="catalytic activity">
    <reaction evidence="1">
        <text>(S)-dihydroorotate + H2O = N-carbamoyl-L-aspartate + H(+)</text>
        <dbReference type="Rhea" id="RHEA:24296"/>
        <dbReference type="ChEBI" id="CHEBI:15377"/>
        <dbReference type="ChEBI" id="CHEBI:15378"/>
        <dbReference type="ChEBI" id="CHEBI:30864"/>
        <dbReference type="ChEBI" id="CHEBI:32814"/>
        <dbReference type="EC" id="3.5.2.3"/>
    </reaction>
</comment>
<comment type="cofactor">
    <cofactor evidence="1">
        <name>Zn(2+)</name>
        <dbReference type="ChEBI" id="CHEBI:29105"/>
    </cofactor>
    <text evidence="1">Binds 2 Zn(2+) ions per subunit.</text>
</comment>
<comment type="pathway">
    <text evidence="1">Pyrimidine metabolism; UMP biosynthesis via de novo pathway; (S)-dihydroorotate from bicarbonate: step 3/3.</text>
</comment>
<comment type="subunit">
    <text evidence="1">Homodimer.</text>
</comment>
<comment type="similarity">
    <text evidence="1">Belongs to the metallo-dependent hydrolases superfamily. DHOase family. Class II DHOase subfamily.</text>
</comment>
<feature type="chain" id="PRO_1000193070" description="Dihydroorotase">
    <location>
        <begin position="1"/>
        <end position="348"/>
    </location>
</feature>
<feature type="active site" evidence="1">
    <location>
        <position position="251"/>
    </location>
</feature>
<feature type="binding site" evidence="1">
    <location>
        <position position="17"/>
    </location>
    <ligand>
        <name>Zn(2+)</name>
        <dbReference type="ChEBI" id="CHEBI:29105"/>
        <label>1</label>
    </ligand>
</feature>
<feature type="binding site" evidence="1">
    <location>
        <begin position="19"/>
        <end position="21"/>
    </location>
    <ligand>
        <name>substrate</name>
    </ligand>
</feature>
<feature type="binding site" evidence="1">
    <location>
        <position position="19"/>
    </location>
    <ligand>
        <name>Zn(2+)</name>
        <dbReference type="ChEBI" id="CHEBI:29105"/>
        <label>1</label>
    </ligand>
</feature>
<feature type="binding site" evidence="1">
    <location>
        <position position="45"/>
    </location>
    <ligand>
        <name>substrate</name>
    </ligand>
</feature>
<feature type="binding site" description="via carbamate group" evidence="1">
    <location>
        <position position="103"/>
    </location>
    <ligand>
        <name>Zn(2+)</name>
        <dbReference type="ChEBI" id="CHEBI:29105"/>
        <label>1</label>
    </ligand>
</feature>
<feature type="binding site" description="via carbamate group" evidence="1">
    <location>
        <position position="103"/>
    </location>
    <ligand>
        <name>Zn(2+)</name>
        <dbReference type="ChEBI" id="CHEBI:29105"/>
        <label>2</label>
    </ligand>
</feature>
<feature type="binding site" evidence="1">
    <location>
        <position position="140"/>
    </location>
    <ligand>
        <name>substrate</name>
    </ligand>
</feature>
<feature type="binding site" evidence="1">
    <location>
        <position position="140"/>
    </location>
    <ligand>
        <name>Zn(2+)</name>
        <dbReference type="ChEBI" id="CHEBI:29105"/>
        <label>2</label>
    </ligand>
</feature>
<feature type="binding site" evidence="1">
    <location>
        <position position="178"/>
    </location>
    <ligand>
        <name>Zn(2+)</name>
        <dbReference type="ChEBI" id="CHEBI:29105"/>
        <label>2</label>
    </ligand>
</feature>
<feature type="binding site" evidence="1">
    <location>
        <position position="223"/>
    </location>
    <ligand>
        <name>substrate</name>
    </ligand>
</feature>
<feature type="binding site" evidence="1">
    <location>
        <position position="251"/>
    </location>
    <ligand>
        <name>Zn(2+)</name>
        <dbReference type="ChEBI" id="CHEBI:29105"/>
        <label>1</label>
    </ligand>
</feature>
<feature type="binding site" evidence="1">
    <location>
        <position position="255"/>
    </location>
    <ligand>
        <name>substrate</name>
    </ligand>
</feature>
<feature type="binding site" evidence="1">
    <location>
        <position position="267"/>
    </location>
    <ligand>
        <name>substrate</name>
    </ligand>
</feature>
<feature type="modified residue" description="N6-carboxylysine" evidence="1">
    <location>
        <position position="103"/>
    </location>
</feature>
<name>PYRC_ECOSM</name>
<accession>B1LIU8</accession>
<proteinExistence type="inferred from homology"/>
<organism>
    <name type="scientific">Escherichia coli (strain SMS-3-5 / SECEC)</name>
    <dbReference type="NCBI Taxonomy" id="439855"/>
    <lineage>
        <taxon>Bacteria</taxon>
        <taxon>Pseudomonadati</taxon>
        <taxon>Pseudomonadota</taxon>
        <taxon>Gammaproteobacteria</taxon>
        <taxon>Enterobacterales</taxon>
        <taxon>Enterobacteriaceae</taxon>
        <taxon>Escherichia</taxon>
    </lineage>
</organism>
<keyword id="KW-0378">Hydrolase</keyword>
<keyword id="KW-0479">Metal-binding</keyword>
<keyword id="KW-0665">Pyrimidine biosynthesis</keyword>
<keyword id="KW-0862">Zinc</keyword>
<evidence type="ECO:0000255" key="1">
    <source>
        <dbReference type="HAMAP-Rule" id="MF_00219"/>
    </source>
</evidence>
<sequence length="348" mass="38813">MTAPSQVLKIRRPDDWHLHLRDGDMLKTVVPYTSEIYGRAIVMPNLAPPVTTVEAAVAYRQRILDAVPAGHDFTPLMTCYLTDSLDPNELERGFNEGVFTAAKLYPANATTNSSHGVTSVDAIMPVLERMEKIGMPLLVHGEVTHADIDIFDREARFIESVMEPLRQRLTALKVVFEHITTKDAADYVRDGNERLAATITPQHLMFNRNHMLVGGVRPHLYCLPILKRNIHQQALRELVASGFNRVFLGTDSAPHARHRKESSCGCAGCFNAPTALGSYATVFEEMNALQHFEAFCSVNGPQFYGLPVNDTFIELVREEQQVAESIALTDDTLVPFLAGETVRWSVKQ</sequence>
<protein>
    <recommendedName>
        <fullName evidence="1">Dihydroorotase</fullName>
        <shortName evidence="1">DHOase</shortName>
        <ecNumber evidence="1">3.5.2.3</ecNumber>
    </recommendedName>
</protein>
<reference key="1">
    <citation type="journal article" date="2008" name="J. Bacteriol.">
        <title>Insights into the environmental resistance gene pool from the genome sequence of the multidrug-resistant environmental isolate Escherichia coli SMS-3-5.</title>
        <authorList>
            <person name="Fricke W.F."/>
            <person name="Wright M.S."/>
            <person name="Lindell A.H."/>
            <person name="Harkins D.M."/>
            <person name="Baker-Austin C."/>
            <person name="Ravel J."/>
            <person name="Stepanauskas R."/>
        </authorList>
    </citation>
    <scope>NUCLEOTIDE SEQUENCE [LARGE SCALE GENOMIC DNA]</scope>
    <source>
        <strain>SMS-3-5 / SECEC</strain>
    </source>
</reference>
<dbReference type="EC" id="3.5.2.3" evidence="1"/>
<dbReference type="EMBL" id="CP000970">
    <property type="protein sequence ID" value="ACB16049.1"/>
    <property type="molecule type" value="Genomic_DNA"/>
</dbReference>
<dbReference type="RefSeq" id="WP_000126543.1">
    <property type="nucleotide sequence ID" value="NC_010498.1"/>
</dbReference>
<dbReference type="SMR" id="B1LIU8"/>
<dbReference type="MEROPS" id="M38.A02"/>
<dbReference type="KEGG" id="ecm:EcSMS35_2067"/>
<dbReference type="HOGENOM" id="CLU_041558_1_0_6"/>
<dbReference type="UniPathway" id="UPA00070">
    <property type="reaction ID" value="UER00117"/>
</dbReference>
<dbReference type="Proteomes" id="UP000007011">
    <property type="component" value="Chromosome"/>
</dbReference>
<dbReference type="GO" id="GO:0005829">
    <property type="term" value="C:cytosol"/>
    <property type="evidence" value="ECO:0007669"/>
    <property type="project" value="TreeGrafter"/>
</dbReference>
<dbReference type="GO" id="GO:0004151">
    <property type="term" value="F:dihydroorotase activity"/>
    <property type="evidence" value="ECO:0007669"/>
    <property type="project" value="UniProtKB-UniRule"/>
</dbReference>
<dbReference type="GO" id="GO:0008270">
    <property type="term" value="F:zinc ion binding"/>
    <property type="evidence" value="ECO:0007669"/>
    <property type="project" value="UniProtKB-UniRule"/>
</dbReference>
<dbReference type="GO" id="GO:0006207">
    <property type="term" value="P:'de novo' pyrimidine nucleobase biosynthetic process"/>
    <property type="evidence" value="ECO:0007669"/>
    <property type="project" value="TreeGrafter"/>
</dbReference>
<dbReference type="GO" id="GO:0044205">
    <property type="term" value="P:'de novo' UMP biosynthetic process"/>
    <property type="evidence" value="ECO:0007669"/>
    <property type="project" value="UniProtKB-UniRule"/>
</dbReference>
<dbReference type="CDD" id="cd01294">
    <property type="entry name" value="DHOase"/>
    <property type="match status" value="1"/>
</dbReference>
<dbReference type="FunFam" id="3.20.20.140:FF:000006">
    <property type="entry name" value="Dihydroorotase"/>
    <property type="match status" value="1"/>
</dbReference>
<dbReference type="Gene3D" id="3.20.20.140">
    <property type="entry name" value="Metal-dependent hydrolases"/>
    <property type="match status" value="1"/>
</dbReference>
<dbReference type="HAMAP" id="MF_00219">
    <property type="entry name" value="PyrC_classII"/>
    <property type="match status" value="1"/>
</dbReference>
<dbReference type="InterPro" id="IPR006680">
    <property type="entry name" value="Amidohydro-rel"/>
</dbReference>
<dbReference type="InterPro" id="IPR004721">
    <property type="entry name" value="DHOdimr"/>
</dbReference>
<dbReference type="InterPro" id="IPR002195">
    <property type="entry name" value="Dihydroorotase_CS"/>
</dbReference>
<dbReference type="InterPro" id="IPR032466">
    <property type="entry name" value="Metal_Hydrolase"/>
</dbReference>
<dbReference type="NCBIfam" id="TIGR00856">
    <property type="entry name" value="pyrC_dimer"/>
    <property type="match status" value="1"/>
</dbReference>
<dbReference type="PANTHER" id="PTHR43137">
    <property type="entry name" value="DIHYDROOROTASE"/>
    <property type="match status" value="1"/>
</dbReference>
<dbReference type="PANTHER" id="PTHR43137:SF1">
    <property type="entry name" value="DIHYDROOROTASE"/>
    <property type="match status" value="1"/>
</dbReference>
<dbReference type="Pfam" id="PF01979">
    <property type="entry name" value="Amidohydro_1"/>
    <property type="match status" value="1"/>
</dbReference>
<dbReference type="PIRSF" id="PIRSF001237">
    <property type="entry name" value="DHOdimr"/>
    <property type="match status" value="1"/>
</dbReference>
<dbReference type="SUPFAM" id="SSF51556">
    <property type="entry name" value="Metallo-dependent hydrolases"/>
    <property type="match status" value="1"/>
</dbReference>
<dbReference type="PROSITE" id="PS00482">
    <property type="entry name" value="DIHYDROOROTASE_1"/>
    <property type="match status" value="1"/>
</dbReference>
<dbReference type="PROSITE" id="PS00483">
    <property type="entry name" value="DIHYDROOROTASE_2"/>
    <property type="match status" value="1"/>
</dbReference>